<sequence length="280" mass="31283">MATYLIGDVHGCYDELIALLHKVEFTPGKDTLWLTGDLVARGPGSLDVLRYVKSLGDSVRLVLGNHDLHLLAVFAGISRNKPKDRLTPLLEAPDADELLNWLRRQPLLQIDEEKKLVMAHAGITPQWDLQTAKECARDVEAVLSSDSYPFFLDAMYGDMPNNWSPELRGLGRLRFITNAFTRMRFCFPNGQLDMYSKESPEEAPAPLKPWFAIPGPVAEEYSIAFGHWASLEGKGTPEGIYALDTGCCWGGSLTCLRWEDKQYFVQPSNRHKDLGEAAAS</sequence>
<keyword id="KW-0378">Hydrolase</keyword>
<keyword id="KW-1185">Reference proteome</keyword>
<evidence type="ECO:0000255" key="1">
    <source>
        <dbReference type="HAMAP-Rule" id="MF_00199"/>
    </source>
</evidence>
<feature type="chain" id="PRO_1000058556" description="Bis(5'-nucleosyl)-tetraphosphatase, symmetrical">
    <location>
        <begin position="1"/>
        <end position="280"/>
    </location>
</feature>
<reference key="1">
    <citation type="journal article" date="2008" name="J. Bacteriol.">
        <title>The pangenome structure of Escherichia coli: comparative genomic analysis of E. coli commensal and pathogenic isolates.</title>
        <authorList>
            <person name="Rasko D.A."/>
            <person name="Rosovitz M.J."/>
            <person name="Myers G.S.A."/>
            <person name="Mongodin E.F."/>
            <person name="Fricke W.F."/>
            <person name="Gajer P."/>
            <person name="Crabtree J."/>
            <person name="Sebaihia M."/>
            <person name="Thomson N.R."/>
            <person name="Chaudhuri R."/>
            <person name="Henderson I.R."/>
            <person name="Sperandio V."/>
            <person name="Ravel J."/>
        </authorList>
    </citation>
    <scope>NUCLEOTIDE SEQUENCE [LARGE SCALE GENOMIC DNA]</scope>
    <source>
        <strain>E24377A / ETEC</strain>
    </source>
</reference>
<comment type="function">
    <text evidence="1">Hydrolyzes diadenosine 5',5'''-P1,P4-tetraphosphate to yield ADP.</text>
</comment>
<comment type="catalytic activity">
    <reaction evidence="1">
        <text>P(1),P(4)-bis(5'-adenosyl) tetraphosphate + H2O = 2 ADP + 2 H(+)</text>
        <dbReference type="Rhea" id="RHEA:24252"/>
        <dbReference type="ChEBI" id="CHEBI:15377"/>
        <dbReference type="ChEBI" id="CHEBI:15378"/>
        <dbReference type="ChEBI" id="CHEBI:58141"/>
        <dbReference type="ChEBI" id="CHEBI:456216"/>
        <dbReference type="EC" id="3.6.1.41"/>
    </reaction>
</comment>
<comment type="similarity">
    <text evidence="1">Belongs to the Ap4A hydrolase family.</text>
</comment>
<proteinExistence type="inferred from homology"/>
<gene>
    <name evidence="1" type="primary">apaH</name>
    <name type="ordered locus">EcE24377A_0053</name>
</gene>
<dbReference type="EC" id="3.6.1.41" evidence="1"/>
<dbReference type="EMBL" id="CP000800">
    <property type="protein sequence ID" value="ABV19966.1"/>
    <property type="molecule type" value="Genomic_DNA"/>
</dbReference>
<dbReference type="RefSeq" id="WP_000257186.1">
    <property type="nucleotide sequence ID" value="NC_009801.1"/>
</dbReference>
<dbReference type="SMR" id="A7ZHE2"/>
<dbReference type="KEGG" id="ecw:EcE24377A_0053"/>
<dbReference type="HOGENOM" id="CLU_056184_2_0_6"/>
<dbReference type="Proteomes" id="UP000001122">
    <property type="component" value="Chromosome"/>
</dbReference>
<dbReference type="GO" id="GO:0008803">
    <property type="term" value="F:bis(5'-nucleosyl)-tetraphosphatase (symmetrical) activity"/>
    <property type="evidence" value="ECO:0007669"/>
    <property type="project" value="UniProtKB-UniRule"/>
</dbReference>
<dbReference type="CDD" id="cd07422">
    <property type="entry name" value="MPP_ApaH"/>
    <property type="match status" value="1"/>
</dbReference>
<dbReference type="FunFam" id="3.60.21.10:FF:000013">
    <property type="entry name" value="Bis(5'-nucleosyl)-tetraphosphatase, symmetrical"/>
    <property type="match status" value="1"/>
</dbReference>
<dbReference type="Gene3D" id="3.60.21.10">
    <property type="match status" value="1"/>
</dbReference>
<dbReference type="HAMAP" id="MF_00199">
    <property type="entry name" value="ApaH"/>
    <property type="match status" value="1"/>
</dbReference>
<dbReference type="InterPro" id="IPR004617">
    <property type="entry name" value="ApaH"/>
</dbReference>
<dbReference type="InterPro" id="IPR004843">
    <property type="entry name" value="Calcineurin-like_PHP_ApaH"/>
</dbReference>
<dbReference type="InterPro" id="IPR029052">
    <property type="entry name" value="Metallo-depent_PP-like"/>
</dbReference>
<dbReference type="NCBIfam" id="TIGR00668">
    <property type="entry name" value="apaH"/>
    <property type="match status" value="1"/>
</dbReference>
<dbReference type="NCBIfam" id="NF001204">
    <property type="entry name" value="PRK00166.1"/>
    <property type="match status" value="1"/>
</dbReference>
<dbReference type="PANTHER" id="PTHR40942">
    <property type="match status" value="1"/>
</dbReference>
<dbReference type="PANTHER" id="PTHR40942:SF4">
    <property type="entry name" value="CYTOCHROME C5"/>
    <property type="match status" value="1"/>
</dbReference>
<dbReference type="Pfam" id="PF00149">
    <property type="entry name" value="Metallophos"/>
    <property type="match status" value="1"/>
</dbReference>
<dbReference type="PIRSF" id="PIRSF000903">
    <property type="entry name" value="B5n-ttraPtase_sm"/>
    <property type="match status" value="1"/>
</dbReference>
<dbReference type="SUPFAM" id="SSF56300">
    <property type="entry name" value="Metallo-dependent phosphatases"/>
    <property type="match status" value="1"/>
</dbReference>
<name>APAH_ECO24</name>
<accession>A7ZHE2</accession>
<organism>
    <name type="scientific">Escherichia coli O139:H28 (strain E24377A / ETEC)</name>
    <dbReference type="NCBI Taxonomy" id="331111"/>
    <lineage>
        <taxon>Bacteria</taxon>
        <taxon>Pseudomonadati</taxon>
        <taxon>Pseudomonadota</taxon>
        <taxon>Gammaproteobacteria</taxon>
        <taxon>Enterobacterales</taxon>
        <taxon>Enterobacteriaceae</taxon>
        <taxon>Escherichia</taxon>
    </lineage>
</organism>
<protein>
    <recommendedName>
        <fullName evidence="1">Bis(5'-nucleosyl)-tetraphosphatase, symmetrical</fullName>
        <ecNumber evidence="1">3.6.1.41</ecNumber>
    </recommendedName>
    <alternativeName>
        <fullName evidence="1">Ap4A hydrolase</fullName>
    </alternativeName>
    <alternativeName>
        <fullName evidence="1">Diadenosine 5',5'''-P1,P4-tetraphosphate pyrophosphohydrolase</fullName>
    </alternativeName>
    <alternativeName>
        <fullName evidence="1">Diadenosine tetraphosphatase</fullName>
    </alternativeName>
</protein>